<reference key="1">
    <citation type="journal article" date="2002" name="Lancet">
        <title>Genome and virulence determinants of high virulence community-acquired MRSA.</title>
        <authorList>
            <person name="Baba T."/>
            <person name="Takeuchi F."/>
            <person name="Kuroda M."/>
            <person name="Yuzawa H."/>
            <person name="Aoki K."/>
            <person name="Oguchi A."/>
            <person name="Nagai Y."/>
            <person name="Iwama N."/>
            <person name="Asano K."/>
            <person name="Naimi T."/>
            <person name="Kuroda H."/>
            <person name="Cui L."/>
            <person name="Yamamoto K."/>
            <person name="Hiramatsu K."/>
        </authorList>
    </citation>
    <scope>NUCLEOTIDE SEQUENCE [LARGE SCALE GENOMIC DNA]</scope>
    <source>
        <strain>MW2</strain>
    </source>
</reference>
<accession>P60078</accession>
<accession>Q99UD5</accession>
<organism>
    <name type="scientific">Staphylococcus aureus (strain MW2)</name>
    <dbReference type="NCBI Taxonomy" id="196620"/>
    <lineage>
        <taxon>Bacteria</taxon>
        <taxon>Bacillati</taxon>
        <taxon>Bacillota</taxon>
        <taxon>Bacilli</taxon>
        <taxon>Bacillales</taxon>
        <taxon>Staphylococcaceae</taxon>
        <taxon>Staphylococcus</taxon>
    </lineage>
</organism>
<evidence type="ECO:0000255" key="1">
    <source>
        <dbReference type="HAMAP-Rule" id="MF_01103"/>
    </source>
</evidence>
<evidence type="ECO:0000256" key="2">
    <source>
        <dbReference type="SAM" id="MobiDB-lite"/>
    </source>
</evidence>
<feature type="chain" id="PRO_0000094993" description="UPF0291 protein MW1228">
    <location>
        <begin position="1"/>
        <end position="79"/>
    </location>
</feature>
<feature type="region of interest" description="Disordered" evidence="2">
    <location>
        <begin position="56"/>
        <end position="79"/>
    </location>
</feature>
<feature type="compositionally biased region" description="Basic and acidic residues" evidence="2">
    <location>
        <begin position="64"/>
        <end position="79"/>
    </location>
</feature>
<proteinExistence type="inferred from homology"/>
<gene>
    <name type="ordered locus">MW1228</name>
</gene>
<protein>
    <recommendedName>
        <fullName evidence="1">UPF0291 protein MW1228</fullName>
    </recommendedName>
</protein>
<sequence length="79" mass="9203">MSNSDLNIERINELAKKKKEVGLTQEEAKEQTALRKAYLESFRKGFKQQIENTKVIDPEGNDVTPEKIKEIQQKRDNKN</sequence>
<comment type="subcellular location">
    <subcellularLocation>
        <location evidence="1">Cytoplasm</location>
    </subcellularLocation>
</comment>
<comment type="similarity">
    <text evidence="1">Belongs to the UPF0291 family.</text>
</comment>
<keyword id="KW-0963">Cytoplasm</keyword>
<name>Y1228_STAAW</name>
<dbReference type="EMBL" id="BA000033">
    <property type="protein sequence ID" value="BAB95093.1"/>
    <property type="molecule type" value="Genomic_DNA"/>
</dbReference>
<dbReference type="RefSeq" id="WP_000071351.1">
    <property type="nucleotide sequence ID" value="NC_003923.1"/>
</dbReference>
<dbReference type="SMR" id="P60078"/>
<dbReference type="KEGG" id="sam:MW1228"/>
<dbReference type="HOGENOM" id="CLU_173137_0_2_9"/>
<dbReference type="GO" id="GO:0005737">
    <property type="term" value="C:cytoplasm"/>
    <property type="evidence" value="ECO:0007669"/>
    <property type="project" value="UniProtKB-SubCell"/>
</dbReference>
<dbReference type="Gene3D" id="1.10.287.540">
    <property type="entry name" value="Helix hairpin bin"/>
    <property type="match status" value="1"/>
</dbReference>
<dbReference type="HAMAP" id="MF_01103">
    <property type="entry name" value="UPF0291"/>
    <property type="match status" value="1"/>
</dbReference>
<dbReference type="InterPro" id="IPR009242">
    <property type="entry name" value="DUF896"/>
</dbReference>
<dbReference type="PANTHER" id="PTHR37300">
    <property type="entry name" value="UPF0291 PROTEIN CBO2609/CLC_2481"/>
    <property type="match status" value="1"/>
</dbReference>
<dbReference type="PANTHER" id="PTHR37300:SF1">
    <property type="entry name" value="UPF0291 PROTEIN YNZC"/>
    <property type="match status" value="1"/>
</dbReference>
<dbReference type="Pfam" id="PF05979">
    <property type="entry name" value="DUF896"/>
    <property type="match status" value="1"/>
</dbReference>
<dbReference type="SUPFAM" id="SSF158221">
    <property type="entry name" value="YnzC-like"/>
    <property type="match status" value="1"/>
</dbReference>